<name>CYSC_PICP2</name>
<proteinExistence type="inferred from homology"/>
<reference key="1">
    <citation type="submission" date="2008-02" db="EMBL/GenBank/DDBJ databases">
        <title>Complete sequence of Synechococcus sp. PCC 7002.</title>
        <authorList>
            <person name="Li T."/>
            <person name="Zhao J."/>
            <person name="Zhao C."/>
            <person name="Liu Z."/>
            <person name="Zhao F."/>
            <person name="Marquardt J."/>
            <person name="Nomura C.T."/>
            <person name="Persson S."/>
            <person name="Detter J.C."/>
            <person name="Richardson P.M."/>
            <person name="Lanz C."/>
            <person name="Schuster S.C."/>
            <person name="Wang J."/>
            <person name="Li S."/>
            <person name="Huang X."/>
            <person name="Cai T."/>
            <person name="Yu Z."/>
            <person name="Luo J."/>
            <person name="Zhao J."/>
            <person name="Bryant D.A."/>
        </authorList>
    </citation>
    <scope>NUCLEOTIDE SEQUENCE [LARGE SCALE GENOMIC DNA]</scope>
    <source>
        <strain>ATCC 27264 / PCC 7002 / PR-6</strain>
    </source>
</reference>
<organism>
    <name type="scientific">Picosynechococcus sp. (strain ATCC 27264 / PCC 7002 / PR-6)</name>
    <name type="common">Agmenellum quadruplicatum</name>
    <dbReference type="NCBI Taxonomy" id="32049"/>
    <lineage>
        <taxon>Bacteria</taxon>
        <taxon>Bacillati</taxon>
        <taxon>Cyanobacteriota</taxon>
        <taxon>Cyanophyceae</taxon>
        <taxon>Oscillatoriophycideae</taxon>
        <taxon>Chroococcales</taxon>
        <taxon>Geminocystaceae</taxon>
        <taxon>Picosynechococcus</taxon>
    </lineage>
</organism>
<sequence length="177" mass="19954">MEHRGVTVWFTGLSGAGKTTISHALAERLKAAGCKLEILDGDIVRTNLTKGLGFSKEDRDENIRRIGFVSHLLTRNGVIVFVSAISPYREIREEVRQRIGDFVEIFVNAPLEECERRDVKGLYQRARAGEIKGFTGIDDPYEAPTNPEVECRTDLEELEESIEKVMKKLTELGYITP</sequence>
<accession>B1XN05</accession>
<evidence type="ECO:0000255" key="1">
    <source>
        <dbReference type="HAMAP-Rule" id="MF_00065"/>
    </source>
</evidence>
<protein>
    <recommendedName>
        <fullName evidence="1">Adenylyl-sulfate kinase</fullName>
        <ecNumber evidence="1">2.7.1.25</ecNumber>
    </recommendedName>
    <alternativeName>
        <fullName evidence="1">APS kinase</fullName>
    </alternativeName>
    <alternativeName>
        <fullName evidence="1">ATP adenosine-5'-phosphosulfate 3'-phosphotransferase</fullName>
    </alternativeName>
    <alternativeName>
        <fullName evidence="1">Adenosine-5'-phosphosulfate kinase</fullName>
    </alternativeName>
</protein>
<gene>
    <name evidence="1" type="primary">cysC</name>
    <name type="ordered locus">SYNPCC7002_A1494</name>
</gene>
<keyword id="KW-0067">ATP-binding</keyword>
<keyword id="KW-0418">Kinase</keyword>
<keyword id="KW-0547">Nucleotide-binding</keyword>
<keyword id="KW-0597">Phosphoprotein</keyword>
<keyword id="KW-1185">Reference proteome</keyword>
<keyword id="KW-0808">Transferase</keyword>
<dbReference type="EC" id="2.7.1.25" evidence="1"/>
<dbReference type="EMBL" id="CP000951">
    <property type="protein sequence ID" value="ACA99485.1"/>
    <property type="molecule type" value="Genomic_DNA"/>
</dbReference>
<dbReference type="RefSeq" id="WP_012307108.1">
    <property type="nucleotide sequence ID" value="NZ_JAHHPU010000007.1"/>
</dbReference>
<dbReference type="SMR" id="B1XN05"/>
<dbReference type="STRING" id="32049.SYNPCC7002_A1494"/>
<dbReference type="KEGG" id="syp:SYNPCC7002_A1494"/>
<dbReference type="eggNOG" id="COG0529">
    <property type="taxonomic scope" value="Bacteria"/>
</dbReference>
<dbReference type="HOGENOM" id="CLU_046932_2_1_3"/>
<dbReference type="UniPathway" id="UPA00140">
    <property type="reaction ID" value="UER00205"/>
</dbReference>
<dbReference type="Proteomes" id="UP000001688">
    <property type="component" value="Chromosome"/>
</dbReference>
<dbReference type="GO" id="GO:0005737">
    <property type="term" value="C:cytoplasm"/>
    <property type="evidence" value="ECO:0007669"/>
    <property type="project" value="TreeGrafter"/>
</dbReference>
<dbReference type="GO" id="GO:0004020">
    <property type="term" value="F:adenylylsulfate kinase activity"/>
    <property type="evidence" value="ECO:0007669"/>
    <property type="project" value="UniProtKB-UniRule"/>
</dbReference>
<dbReference type="GO" id="GO:0005524">
    <property type="term" value="F:ATP binding"/>
    <property type="evidence" value="ECO:0007669"/>
    <property type="project" value="UniProtKB-UniRule"/>
</dbReference>
<dbReference type="GO" id="GO:0004781">
    <property type="term" value="F:sulfate adenylyltransferase (ATP) activity"/>
    <property type="evidence" value="ECO:0007669"/>
    <property type="project" value="TreeGrafter"/>
</dbReference>
<dbReference type="GO" id="GO:0070814">
    <property type="term" value="P:hydrogen sulfide biosynthetic process"/>
    <property type="evidence" value="ECO:0007669"/>
    <property type="project" value="UniProtKB-UniRule"/>
</dbReference>
<dbReference type="GO" id="GO:0010134">
    <property type="term" value="P:sulfate assimilation via adenylyl sulfate reduction"/>
    <property type="evidence" value="ECO:0007669"/>
    <property type="project" value="TreeGrafter"/>
</dbReference>
<dbReference type="GO" id="GO:0019379">
    <property type="term" value="P:sulfate assimilation, phosphoadenylyl sulfate reduction by phosphoadenylyl-sulfate reductase (thioredoxin)"/>
    <property type="evidence" value="ECO:0007669"/>
    <property type="project" value="TreeGrafter"/>
</dbReference>
<dbReference type="CDD" id="cd02027">
    <property type="entry name" value="APSK"/>
    <property type="match status" value="1"/>
</dbReference>
<dbReference type="FunFam" id="3.40.50.300:FF:000802">
    <property type="entry name" value="Sulfate adenylyltransferase"/>
    <property type="match status" value="1"/>
</dbReference>
<dbReference type="Gene3D" id="3.40.50.300">
    <property type="entry name" value="P-loop containing nucleotide triphosphate hydrolases"/>
    <property type="match status" value="1"/>
</dbReference>
<dbReference type="HAMAP" id="MF_00065">
    <property type="entry name" value="Adenylyl_sulf_kinase"/>
    <property type="match status" value="1"/>
</dbReference>
<dbReference type="InterPro" id="IPR002891">
    <property type="entry name" value="APS_kinase"/>
</dbReference>
<dbReference type="InterPro" id="IPR027417">
    <property type="entry name" value="P-loop_NTPase"/>
</dbReference>
<dbReference type="InterPro" id="IPR050512">
    <property type="entry name" value="Sulf_AdTrans/APS_kinase"/>
</dbReference>
<dbReference type="NCBIfam" id="TIGR00455">
    <property type="entry name" value="apsK"/>
    <property type="match status" value="1"/>
</dbReference>
<dbReference type="NCBIfam" id="NF002059">
    <property type="entry name" value="PRK00889.1"/>
    <property type="match status" value="1"/>
</dbReference>
<dbReference type="NCBIfam" id="NF003013">
    <property type="entry name" value="PRK03846.1"/>
    <property type="match status" value="1"/>
</dbReference>
<dbReference type="NCBIfam" id="NF004041">
    <property type="entry name" value="PRK05541.1"/>
    <property type="match status" value="1"/>
</dbReference>
<dbReference type="PANTHER" id="PTHR42700">
    <property type="entry name" value="SULFATE ADENYLYLTRANSFERASE"/>
    <property type="match status" value="1"/>
</dbReference>
<dbReference type="PANTHER" id="PTHR42700:SF1">
    <property type="entry name" value="SULFATE ADENYLYLTRANSFERASE"/>
    <property type="match status" value="1"/>
</dbReference>
<dbReference type="Pfam" id="PF01583">
    <property type="entry name" value="APS_kinase"/>
    <property type="match status" value="1"/>
</dbReference>
<dbReference type="SUPFAM" id="SSF52540">
    <property type="entry name" value="P-loop containing nucleoside triphosphate hydrolases"/>
    <property type="match status" value="1"/>
</dbReference>
<comment type="function">
    <text evidence="1">Catalyzes the synthesis of activated sulfate.</text>
</comment>
<comment type="catalytic activity">
    <reaction evidence="1">
        <text>adenosine 5'-phosphosulfate + ATP = 3'-phosphoadenylyl sulfate + ADP + H(+)</text>
        <dbReference type="Rhea" id="RHEA:24152"/>
        <dbReference type="ChEBI" id="CHEBI:15378"/>
        <dbReference type="ChEBI" id="CHEBI:30616"/>
        <dbReference type="ChEBI" id="CHEBI:58243"/>
        <dbReference type="ChEBI" id="CHEBI:58339"/>
        <dbReference type="ChEBI" id="CHEBI:456216"/>
        <dbReference type="EC" id="2.7.1.25"/>
    </reaction>
</comment>
<comment type="pathway">
    <text evidence="1">Sulfur metabolism; hydrogen sulfide biosynthesis; sulfite from sulfate: step 2/3.</text>
</comment>
<comment type="similarity">
    <text evidence="1">Belongs to the APS kinase family.</text>
</comment>
<feature type="chain" id="PRO_1000092253" description="Adenylyl-sulfate kinase">
    <location>
        <begin position="1"/>
        <end position="177"/>
    </location>
</feature>
<feature type="active site" description="Phosphoserine intermediate" evidence="1">
    <location>
        <position position="86"/>
    </location>
</feature>
<feature type="binding site" evidence="1">
    <location>
        <begin position="12"/>
        <end position="19"/>
    </location>
    <ligand>
        <name>ATP</name>
        <dbReference type="ChEBI" id="CHEBI:30616"/>
    </ligand>
</feature>